<sequence length="124" mass="12649">MALTKDDILNAIAEMPVMELVELIEAAEEKFGVDASAAVAVAAPAAGGEAAAEEKTEFDVVLKAAGANKVSAIKAVRGATGLGLKEAKAMVESAPVAVKEGVSKDEAEELKKQLEEAGAEVEVK</sequence>
<gene>
    <name evidence="1" type="primary">rplL</name>
    <name type="ordered locus">IL0344</name>
</gene>
<comment type="function">
    <text evidence="1">Forms part of the ribosomal stalk which helps the ribosome interact with GTP-bound translation factors. Is thus essential for accurate translation.</text>
</comment>
<comment type="subunit">
    <text evidence="1">Homodimer. Part of the ribosomal stalk of the 50S ribosomal subunit. Forms a multimeric L10(L12)X complex, where L10 forms an elongated spine to which 2 to 4 L12 dimers bind in a sequential fashion. Binds GTP-bound translation factors.</text>
</comment>
<comment type="similarity">
    <text evidence="1">Belongs to the bacterial ribosomal protein bL12 family.</text>
</comment>
<accession>Q5QWA6</accession>
<keyword id="KW-1185">Reference proteome</keyword>
<keyword id="KW-0687">Ribonucleoprotein</keyword>
<keyword id="KW-0689">Ribosomal protein</keyword>
<proteinExistence type="inferred from homology"/>
<reference key="1">
    <citation type="journal article" date="2004" name="Proc. Natl. Acad. Sci. U.S.A.">
        <title>Genome sequence of the deep-sea gamma-proteobacterium Idiomarina loihiensis reveals amino acid fermentation as a source of carbon and energy.</title>
        <authorList>
            <person name="Hou S."/>
            <person name="Saw J.H."/>
            <person name="Lee K.S."/>
            <person name="Freitas T.A."/>
            <person name="Belisle C."/>
            <person name="Kawarabayasi Y."/>
            <person name="Donachie S.P."/>
            <person name="Pikina A."/>
            <person name="Galperin M.Y."/>
            <person name="Koonin E.V."/>
            <person name="Makarova K.S."/>
            <person name="Omelchenko M.V."/>
            <person name="Sorokin A."/>
            <person name="Wolf Y.I."/>
            <person name="Li Q.X."/>
            <person name="Keum Y.S."/>
            <person name="Campbell S."/>
            <person name="Denery J."/>
            <person name="Aizawa S."/>
            <person name="Shibata S."/>
            <person name="Malahoff A."/>
            <person name="Alam M."/>
        </authorList>
    </citation>
    <scope>NUCLEOTIDE SEQUENCE [LARGE SCALE GENOMIC DNA]</scope>
    <source>
        <strain>ATCC BAA-735 / DSM 15497 / L2-TR</strain>
    </source>
</reference>
<feature type="chain" id="PRO_0000243434" description="Large ribosomal subunit protein bL12">
    <location>
        <begin position="1"/>
        <end position="124"/>
    </location>
</feature>
<dbReference type="EMBL" id="AE017340">
    <property type="protein sequence ID" value="AAV81187.1"/>
    <property type="molecule type" value="Genomic_DNA"/>
</dbReference>
<dbReference type="RefSeq" id="WP_011233606.1">
    <property type="nucleotide sequence ID" value="NC_006512.1"/>
</dbReference>
<dbReference type="SMR" id="Q5QWA6"/>
<dbReference type="STRING" id="283942.IL0344"/>
<dbReference type="GeneID" id="41335496"/>
<dbReference type="KEGG" id="ilo:IL0344"/>
<dbReference type="eggNOG" id="COG0222">
    <property type="taxonomic scope" value="Bacteria"/>
</dbReference>
<dbReference type="HOGENOM" id="CLU_086499_3_2_6"/>
<dbReference type="OrthoDB" id="9811748at2"/>
<dbReference type="Proteomes" id="UP000001171">
    <property type="component" value="Chromosome"/>
</dbReference>
<dbReference type="GO" id="GO:0022625">
    <property type="term" value="C:cytosolic large ribosomal subunit"/>
    <property type="evidence" value="ECO:0007669"/>
    <property type="project" value="TreeGrafter"/>
</dbReference>
<dbReference type="GO" id="GO:0003729">
    <property type="term" value="F:mRNA binding"/>
    <property type="evidence" value="ECO:0007669"/>
    <property type="project" value="TreeGrafter"/>
</dbReference>
<dbReference type="GO" id="GO:0003735">
    <property type="term" value="F:structural constituent of ribosome"/>
    <property type="evidence" value="ECO:0007669"/>
    <property type="project" value="InterPro"/>
</dbReference>
<dbReference type="GO" id="GO:0006412">
    <property type="term" value="P:translation"/>
    <property type="evidence" value="ECO:0007669"/>
    <property type="project" value="UniProtKB-UniRule"/>
</dbReference>
<dbReference type="CDD" id="cd00387">
    <property type="entry name" value="Ribosomal_L7_L12"/>
    <property type="match status" value="1"/>
</dbReference>
<dbReference type="FunFam" id="3.30.1390.10:FF:000001">
    <property type="entry name" value="50S ribosomal protein L7/L12"/>
    <property type="match status" value="1"/>
</dbReference>
<dbReference type="Gene3D" id="3.30.1390.10">
    <property type="match status" value="1"/>
</dbReference>
<dbReference type="Gene3D" id="1.20.5.710">
    <property type="entry name" value="Single helix bin"/>
    <property type="match status" value="1"/>
</dbReference>
<dbReference type="HAMAP" id="MF_00368">
    <property type="entry name" value="Ribosomal_bL12"/>
    <property type="match status" value="1"/>
</dbReference>
<dbReference type="InterPro" id="IPR000206">
    <property type="entry name" value="Ribosomal_bL12"/>
</dbReference>
<dbReference type="InterPro" id="IPR013823">
    <property type="entry name" value="Ribosomal_bL12_C"/>
</dbReference>
<dbReference type="InterPro" id="IPR014719">
    <property type="entry name" value="Ribosomal_bL12_C/ClpS-like"/>
</dbReference>
<dbReference type="InterPro" id="IPR008932">
    <property type="entry name" value="Ribosomal_bL12_oligo"/>
</dbReference>
<dbReference type="InterPro" id="IPR036235">
    <property type="entry name" value="Ribosomal_bL12_oligo_N_sf"/>
</dbReference>
<dbReference type="NCBIfam" id="TIGR00855">
    <property type="entry name" value="L12"/>
    <property type="match status" value="1"/>
</dbReference>
<dbReference type="PANTHER" id="PTHR45987">
    <property type="entry name" value="39S RIBOSOMAL PROTEIN L12"/>
    <property type="match status" value="1"/>
</dbReference>
<dbReference type="PANTHER" id="PTHR45987:SF4">
    <property type="entry name" value="LARGE RIBOSOMAL SUBUNIT PROTEIN BL12M"/>
    <property type="match status" value="1"/>
</dbReference>
<dbReference type="Pfam" id="PF00542">
    <property type="entry name" value="Ribosomal_L12"/>
    <property type="match status" value="1"/>
</dbReference>
<dbReference type="Pfam" id="PF16320">
    <property type="entry name" value="Ribosomal_L12_N"/>
    <property type="match status" value="1"/>
</dbReference>
<dbReference type="SUPFAM" id="SSF54736">
    <property type="entry name" value="ClpS-like"/>
    <property type="match status" value="1"/>
</dbReference>
<dbReference type="SUPFAM" id="SSF48300">
    <property type="entry name" value="Ribosomal protein L7/12, oligomerisation (N-terminal) domain"/>
    <property type="match status" value="1"/>
</dbReference>
<name>RL7_IDILO</name>
<protein>
    <recommendedName>
        <fullName evidence="1">Large ribosomal subunit protein bL12</fullName>
    </recommendedName>
    <alternativeName>
        <fullName evidence="2">50S ribosomal protein L7/L12</fullName>
    </alternativeName>
</protein>
<evidence type="ECO:0000255" key="1">
    <source>
        <dbReference type="HAMAP-Rule" id="MF_00368"/>
    </source>
</evidence>
<evidence type="ECO:0000305" key="2"/>
<organism>
    <name type="scientific">Idiomarina loihiensis (strain ATCC BAA-735 / DSM 15497 / L2-TR)</name>
    <dbReference type="NCBI Taxonomy" id="283942"/>
    <lineage>
        <taxon>Bacteria</taxon>
        <taxon>Pseudomonadati</taxon>
        <taxon>Pseudomonadota</taxon>
        <taxon>Gammaproteobacteria</taxon>
        <taxon>Alteromonadales</taxon>
        <taxon>Idiomarinaceae</taxon>
        <taxon>Idiomarina</taxon>
    </lineage>
</organism>